<reference key="1">
    <citation type="journal article" date="2012" name="Stand. Genomic Sci.">
        <title>Complete genome sequence of Polynucleobacter necessarius subsp. asymbioticus type strain (QLW-P1DMWA-1(T)).</title>
        <authorList>
            <person name="Meincke L."/>
            <person name="Copeland A."/>
            <person name="Lapidus A."/>
            <person name="Lucas S."/>
            <person name="Berry K.W."/>
            <person name="Del Rio T.G."/>
            <person name="Hammon N."/>
            <person name="Dalin E."/>
            <person name="Tice H."/>
            <person name="Pitluck S."/>
            <person name="Richardson P."/>
            <person name="Bruce D."/>
            <person name="Goodwin L."/>
            <person name="Han C."/>
            <person name="Tapia R."/>
            <person name="Detter J.C."/>
            <person name="Schmutz J."/>
            <person name="Brettin T."/>
            <person name="Larimer F."/>
            <person name="Land M."/>
            <person name="Hauser L."/>
            <person name="Kyrpides N.C."/>
            <person name="Ivanova N."/>
            <person name="Goker M."/>
            <person name="Woyke T."/>
            <person name="Wu Q.L."/>
            <person name="Pockl M."/>
            <person name="Hahn M.W."/>
            <person name="Klenk H.P."/>
        </authorList>
    </citation>
    <scope>NUCLEOTIDE SEQUENCE [LARGE SCALE GENOMIC DNA]</scope>
    <source>
        <strain>DSM 18221 / CIP 109841 / QLW-P1DMWA-1</strain>
    </source>
</reference>
<organism>
    <name type="scientific">Polynucleobacter asymbioticus (strain DSM 18221 / CIP 109841 / QLW-P1DMWA-1)</name>
    <name type="common">Polynucleobacter necessarius subsp. asymbioticus</name>
    <dbReference type="NCBI Taxonomy" id="312153"/>
    <lineage>
        <taxon>Bacteria</taxon>
        <taxon>Pseudomonadati</taxon>
        <taxon>Pseudomonadota</taxon>
        <taxon>Betaproteobacteria</taxon>
        <taxon>Burkholderiales</taxon>
        <taxon>Burkholderiaceae</taxon>
        <taxon>Polynucleobacter</taxon>
    </lineage>
</organism>
<accession>A4SUX3</accession>
<feature type="chain" id="PRO_1000166142" description="Large ribosomal subunit protein uL5">
    <location>
        <begin position="1"/>
        <end position="180"/>
    </location>
</feature>
<proteinExistence type="inferred from homology"/>
<name>RL5_POLAQ</name>
<evidence type="ECO:0000255" key="1">
    <source>
        <dbReference type="HAMAP-Rule" id="MF_01333"/>
    </source>
</evidence>
<evidence type="ECO:0000305" key="2"/>
<keyword id="KW-1185">Reference proteome</keyword>
<keyword id="KW-0687">Ribonucleoprotein</keyword>
<keyword id="KW-0689">Ribosomal protein</keyword>
<keyword id="KW-0694">RNA-binding</keyword>
<keyword id="KW-0699">rRNA-binding</keyword>
<keyword id="KW-0820">tRNA-binding</keyword>
<gene>
    <name evidence="1" type="primary">rplE</name>
    <name type="ordered locus">Pnuc_0065</name>
</gene>
<dbReference type="EMBL" id="CP000655">
    <property type="protein sequence ID" value="ABP33287.1"/>
    <property type="molecule type" value="Genomic_DNA"/>
</dbReference>
<dbReference type="RefSeq" id="WP_011901912.1">
    <property type="nucleotide sequence ID" value="NC_009379.1"/>
</dbReference>
<dbReference type="SMR" id="A4SUX3"/>
<dbReference type="GeneID" id="31480411"/>
<dbReference type="KEGG" id="pnu:Pnuc_0065"/>
<dbReference type="eggNOG" id="COG0094">
    <property type="taxonomic scope" value="Bacteria"/>
</dbReference>
<dbReference type="HOGENOM" id="CLU_061015_2_1_4"/>
<dbReference type="Proteomes" id="UP000000231">
    <property type="component" value="Chromosome"/>
</dbReference>
<dbReference type="GO" id="GO:1990904">
    <property type="term" value="C:ribonucleoprotein complex"/>
    <property type="evidence" value="ECO:0007669"/>
    <property type="project" value="UniProtKB-KW"/>
</dbReference>
<dbReference type="GO" id="GO:0005840">
    <property type="term" value="C:ribosome"/>
    <property type="evidence" value="ECO:0007669"/>
    <property type="project" value="UniProtKB-KW"/>
</dbReference>
<dbReference type="GO" id="GO:0019843">
    <property type="term" value="F:rRNA binding"/>
    <property type="evidence" value="ECO:0007669"/>
    <property type="project" value="UniProtKB-UniRule"/>
</dbReference>
<dbReference type="GO" id="GO:0003735">
    <property type="term" value="F:structural constituent of ribosome"/>
    <property type="evidence" value="ECO:0007669"/>
    <property type="project" value="InterPro"/>
</dbReference>
<dbReference type="GO" id="GO:0000049">
    <property type="term" value="F:tRNA binding"/>
    <property type="evidence" value="ECO:0007669"/>
    <property type="project" value="UniProtKB-UniRule"/>
</dbReference>
<dbReference type="GO" id="GO:0006412">
    <property type="term" value="P:translation"/>
    <property type="evidence" value="ECO:0007669"/>
    <property type="project" value="UniProtKB-UniRule"/>
</dbReference>
<dbReference type="FunFam" id="3.30.1440.10:FF:000001">
    <property type="entry name" value="50S ribosomal protein L5"/>
    <property type="match status" value="1"/>
</dbReference>
<dbReference type="Gene3D" id="3.30.1440.10">
    <property type="match status" value="1"/>
</dbReference>
<dbReference type="HAMAP" id="MF_01333_B">
    <property type="entry name" value="Ribosomal_uL5_B"/>
    <property type="match status" value="1"/>
</dbReference>
<dbReference type="InterPro" id="IPR002132">
    <property type="entry name" value="Ribosomal_uL5"/>
</dbReference>
<dbReference type="InterPro" id="IPR020930">
    <property type="entry name" value="Ribosomal_uL5_bac-type"/>
</dbReference>
<dbReference type="InterPro" id="IPR031309">
    <property type="entry name" value="Ribosomal_uL5_C"/>
</dbReference>
<dbReference type="InterPro" id="IPR020929">
    <property type="entry name" value="Ribosomal_uL5_CS"/>
</dbReference>
<dbReference type="InterPro" id="IPR022803">
    <property type="entry name" value="Ribosomal_uL5_dom_sf"/>
</dbReference>
<dbReference type="InterPro" id="IPR031310">
    <property type="entry name" value="Ribosomal_uL5_N"/>
</dbReference>
<dbReference type="NCBIfam" id="NF000585">
    <property type="entry name" value="PRK00010.1"/>
    <property type="match status" value="1"/>
</dbReference>
<dbReference type="PANTHER" id="PTHR11994">
    <property type="entry name" value="60S RIBOSOMAL PROTEIN L11-RELATED"/>
    <property type="match status" value="1"/>
</dbReference>
<dbReference type="Pfam" id="PF00281">
    <property type="entry name" value="Ribosomal_L5"/>
    <property type="match status" value="1"/>
</dbReference>
<dbReference type="Pfam" id="PF00673">
    <property type="entry name" value="Ribosomal_L5_C"/>
    <property type="match status" value="1"/>
</dbReference>
<dbReference type="PIRSF" id="PIRSF002161">
    <property type="entry name" value="Ribosomal_L5"/>
    <property type="match status" value="1"/>
</dbReference>
<dbReference type="SUPFAM" id="SSF55282">
    <property type="entry name" value="RL5-like"/>
    <property type="match status" value="1"/>
</dbReference>
<dbReference type="PROSITE" id="PS00358">
    <property type="entry name" value="RIBOSOMAL_L5"/>
    <property type="match status" value="1"/>
</dbReference>
<comment type="function">
    <text evidence="1">This is one of the proteins that bind and probably mediate the attachment of the 5S RNA into the large ribosomal subunit, where it forms part of the central protuberance. In the 70S ribosome it contacts protein S13 of the 30S subunit (bridge B1b), connecting the 2 subunits; this bridge is implicated in subunit movement. Contacts the P site tRNA; the 5S rRNA and some of its associated proteins might help stabilize positioning of ribosome-bound tRNAs.</text>
</comment>
<comment type="subunit">
    <text evidence="1">Part of the 50S ribosomal subunit; part of the 5S rRNA/L5/L18/L25 subcomplex. Contacts the 5S rRNA and the P site tRNA. Forms a bridge to the 30S subunit in the 70S ribosome.</text>
</comment>
<comment type="similarity">
    <text evidence="1">Belongs to the universal ribosomal protein uL5 family.</text>
</comment>
<protein>
    <recommendedName>
        <fullName evidence="1">Large ribosomal subunit protein uL5</fullName>
    </recommendedName>
    <alternativeName>
        <fullName evidence="2">50S ribosomal protein L5</fullName>
    </alternativeName>
</protein>
<sequence>MSTRFQEHYQEKVVADLITKFGYKSVMEVPRITKVTLNMGLGDAVNDKKIIENAVGDLTKVAGQKPVVTKAKKAIAGFKIRQGYPIGAMVTLRGQRMYEFLDRFVTVALPRVRDFRGISGKAFDGRGNYNIGVKEQIIFPEIEYDKIDALRGLNISITTTAKTDEEAKALLAAFKFPFRN</sequence>